<evidence type="ECO:0000250" key="1"/>
<evidence type="ECO:0000305" key="2"/>
<sequence>MSQKTLFTKSALAVAVAIISTQAWSAGFQLNEFSSSGLGRAYSGEGAIADDAGNVSRNPALITMFDRPTFSAGAVYIDPDVNISGTSPSRRTLDADNIAPTAWVPNVHFVAPINDQFGWGASITSNYGLATEFNDTYAGGSVGGTTDLETMNLNLSGAYRLNEAWSFGLGFDAVYARAKIERFAGDLGQLVAAQNPALAPVAGQILSDTKIAHLNGNQWGFGWNAGILYELDKNNRYALTYRSEVKIDFKGNYSSDLPIAINRFNLPIPTATGGATQSGYLTLNLPEMWEVSGYNRVAPQWAIHYSLAYTSWSQFQELKAKSTAGDTLFEKHEGFKDAYRIALGTTYYYDDNWTFRTGIAFDDSPVPAQNRSISIPDQDRFWLSAGTTYAFNKDASVDVGVSYMHGQSVKINEGPYQFESEGKAWLFGTNFNYAF</sequence>
<name>FADL_SALTI</name>
<reference key="1">
    <citation type="journal article" date="2001" name="Nature">
        <title>Complete genome sequence of a multiple drug resistant Salmonella enterica serovar Typhi CT18.</title>
        <authorList>
            <person name="Parkhill J."/>
            <person name="Dougan G."/>
            <person name="James K.D."/>
            <person name="Thomson N.R."/>
            <person name="Pickard D."/>
            <person name="Wain J."/>
            <person name="Churcher C.M."/>
            <person name="Mungall K.L."/>
            <person name="Bentley S.D."/>
            <person name="Holden M.T.G."/>
            <person name="Sebaihia M."/>
            <person name="Baker S."/>
            <person name="Basham D."/>
            <person name="Brooks K."/>
            <person name="Chillingworth T."/>
            <person name="Connerton P."/>
            <person name="Cronin A."/>
            <person name="Davis P."/>
            <person name="Davies R.M."/>
            <person name="Dowd L."/>
            <person name="White N."/>
            <person name="Farrar J."/>
            <person name="Feltwell T."/>
            <person name="Hamlin N."/>
            <person name="Haque A."/>
            <person name="Hien T.T."/>
            <person name="Holroyd S."/>
            <person name="Jagels K."/>
            <person name="Krogh A."/>
            <person name="Larsen T.S."/>
            <person name="Leather S."/>
            <person name="Moule S."/>
            <person name="O'Gaora P."/>
            <person name="Parry C."/>
            <person name="Quail M.A."/>
            <person name="Rutherford K.M."/>
            <person name="Simmonds M."/>
            <person name="Skelton J."/>
            <person name="Stevens K."/>
            <person name="Whitehead S."/>
            <person name="Barrell B.G."/>
        </authorList>
    </citation>
    <scope>NUCLEOTIDE SEQUENCE [LARGE SCALE GENOMIC DNA]</scope>
    <source>
        <strain>CT18</strain>
    </source>
</reference>
<reference key="2">
    <citation type="journal article" date="2003" name="J. Bacteriol.">
        <title>Comparative genomics of Salmonella enterica serovar Typhi strains Ty2 and CT18.</title>
        <authorList>
            <person name="Deng W."/>
            <person name="Liou S.-R."/>
            <person name="Plunkett G. III"/>
            <person name="Mayhew G.F."/>
            <person name="Rose D.J."/>
            <person name="Burland V."/>
            <person name="Kodoyianni V."/>
            <person name="Schwartz D.C."/>
            <person name="Blattner F.R."/>
        </authorList>
    </citation>
    <scope>NUCLEOTIDE SEQUENCE [LARGE SCALE GENOMIC DNA]</scope>
    <source>
        <strain>ATCC 700931 / Ty2</strain>
    </source>
</reference>
<accession>Q8Z4Y8</accession>
<gene>
    <name type="primary">fadL</name>
    <name type="ordered locus">STY2623</name>
    <name type="ordered locus">t0473</name>
</gene>
<keyword id="KW-0998">Cell outer membrane</keyword>
<keyword id="KW-0445">Lipid transport</keyword>
<keyword id="KW-0472">Membrane</keyword>
<keyword id="KW-0732">Signal</keyword>
<keyword id="KW-0812">Transmembrane</keyword>
<keyword id="KW-1134">Transmembrane beta strand</keyword>
<keyword id="KW-0813">Transport</keyword>
<proteinExistence type="inferred from homology"/>
<organism>
    <name type="scientific">Salmonella typhi</name>
    <dbReference type="NCBI Taxonomy" id="90370"/>
    <lineage>
        <taxon>Bacteria</taxon>
        <taxon>Pseudomonadati</taxon>
        <taxon>Pseudomonadota</taxon>
        <taxon>Gammaproteobacteria</taxon>
        <taxon>Enterobacterales</taxon>
        <taxon>Enterobacteriaceae</taxon>
        <taxon>Salmonella</taxon>
    </lineage>
</organism>
<dbReference type="EMBL" id="AL513382">
    <property type="protein sequence ID" value="CAD07623.1"/>
    <property type="status" value="ALT_INIT"/>
    <property type="molecule type" value="Genomic_DNA"/>
</dbReference>
<dbReference type="EMBL" id="AE014613">
    <property type="protein sequence ID" value="AAO68180.1"/>
    <property type="status" value="ALT_INIT"/>
    <property type="molecule type" value="Genomic_DNA"/>
</dbReference>
<dbReference type="RefSeq" id="NP_456932.1">
    <property type="nucleotide sequence ID" value="NC_003198.1"/>
</dbReference>
<dbReference type="RefSeq" id="WP_001766332.1">
    <property type="nucleotide sequence ID" value="NZ_WSUR01000045.1"/>
</dbReference>
<dbReference type="SMR" id="Q8Z4Y8"/>
<dbReference type="STRING" id="220341.gene:17586520"/>
<dbReference type="KEGG" id="stt:t0473"/>
<dbReference type="KEGG" id="sty:STY2623"/>
<dbReference type="PATRIC" id="fig|220341.7.peg.2656"/>
<dbReference type="eggNOG" id="COG2067">
    <property type="taxonomic scope" value="Bacteria"/>
</dbReference>
<dbReference type="HOGENOM" id="CLU_035981_0_0_6"/>
<dbReference type="OMA" id="WDDSWLF"/>
<dbReference type="Proteomes" id="UP000000541">
    <property type="component" value="Chromosome"/>
</dbReference>
<dbReference type="Proteomes" id="UP000002670">
    <property type="component" value="Chromosome"/>
</dbReference>
<dbReference type="GO" id="GO:0009279">
    <property type="term" value="C:cell outer membrane"/>
    <property type="evidence" value="ECO:0007669"/>
    <property type="project" value="UniProtKB-SubCell"/>
</dbReference>
<dbReference type="GO" id="GO:0015483">
    <property type="term" value="F:long-chain fatty acid transporting porin activity"/>
    <property type="evidence" value="ECO:0007669"/>
    <property type="project" value="TreeGrafter"/>
</dbReference>
<dbReference type="FunFam" id="2.40.160.60:FF:000001">
    <property type="entry name" value="Long-chain fatty acid transporter FadL"/>
    <property type="match status" value="1"/>
</dbReference>
<dbReference type="Gene3D" id="2.40.160.60">
    <property type="entry name" value="Outer membrane protein transport protein (OMPP1/FadL/TodX)"/>
    <property type="match status" value="1"/>
</dbReference>
<dbReference type="InterPro" id="IPR005017">
    <property type="entry name" value="OMPP1/FadL/TodX"/>
</dbReference>
<dbReference type="NCBIfam" id="NF007988">
    <property type="entry name" value="PRK10716.1"/>
    <property type="match status" value="1"/>
</dbReference>
<dbReference type="PANTHER" id="PTHR35093:SF3">
    <property type="entry name" value="LONG-CHAIN FATTY ACID TRANSPORT PROTEIN"/>
    <property type="match status" value="1"/>
</dbReference>
<dbReference type="PANTHER" id="PTHR35093">
    <property type="entry name" value="OUTER MEMBRANE PROTEIN NMB0088-RELATED"/>
    <property type="match status" value="1"/>
</dbReference>
<dbReference type="Pfam" id="PF03349">
    <property type="entry name" value="Toluene_X"/>
    <property type="match status" value="1"/>
</dbReference>
<dbReference type="SUPFAM" id="SSF56935">
    <property type="entry name" value="Porins"/>
    <property type="match status" value="1"/>
</dbReference>
<comment type="function">
    <text evidence="1">Involved in translocation of long-chain fatty acids across the outer membrane. FadL may form a specific channel (By similarity).</text>
</comment>
<comment type="subcellular location">
    <subcellularLocation>
        <location evidence="1">Cell outer membrane</location>
        <topology evidence="1">Multi-pass membrane protein</topology>
    </subcellularLocation>
</comment>
<comment type="similarity">
    <text evidence="2">Belongs to the OmpP1/FadL family.</text>
</comment>
<comment type="sequence caution" evidence="2">
    <conflict type="erroneous initiation">
        <sequence resource="EMBL-CDS" id="AAO68180"/>
    </conflict>
</comment>
<comment type="sequence caution" evidence="2">
    <conflict type="erroneous initiation">
        <sequence resource="EMBL-CDS" id="CAD07623"/>
    </conflict>
</comment>
<feature type="signal peptide" evidence="1">
    <location>
        <begin position="1"/>
        <end position="25"/>
    </location>
</feature>
<feature type="chain" id="PRO_0000025205" description="Long-chain fatty acid transport protein">
    <location>
        <begin position="26"/>
        <end position="435"/>
    </location>
</feature>
<protein>
    <recommendedName>
        <fullName>Long-chain fatty acid transport protein</fullName>
    </recommendedName>
    <alternativeName>
        <fullName>Outer membrane FadL protein</fullName>
    </alternativeName>
    <alternativeName>
        <fullName>Outer membrane flp protein</fullName>
    </alternativeName>
</protein>